<organismHost>
    <name type="scientific">Homo sapiens</name>
    <name type="common">Human</name>
    <dbReference type="NCBI Taxonomy" id="9606"/>
</organismHost>
<dbReference type="EMBL" id="EF672602">
    <property type="protein sequence ID" value="ABV53280.1"/>
    <property type="molecule type" value="Genomic_RNA"/>
</dbReference>
<dbReference type="EMBL" id="AB118024">
    <property type="protein sequence ID" value="BAC82357.1"/>
    <property type="molecule type" value="Genomic_RNA"/>
</dbReference>
<dbReference type="PIR" id="I27620">
    <property type="entry name" value="VGXRP"/>
</dbReference>
<dbReference type="SMR" id="P11854"/>
<dbReference type="Proteomes" id="UP000007047">
    <property type="component" value="Genome"/>
</dbReference>
<dbReference type="GO" id="GO:0044166">
    <property type="term" value="C:host cell endoplasmic reticulum lumen"/>
    <property type="evidence" value="ECO:0007669"/>
    <property type="project" value="UniProtKB-SubCell"/>
</dbReference>
<dbReference type="GO" id="GO:0039621">
    <property type="term" value="C:T=13 icosahedral viral capsid"/>
    <property type="evidence" value="ECO:0007669"/>
    <property type="project" value="UniProtKB-UniRule"/>
</dbReference>
<dbReference type="GO" id="GO:0039624">
    <property type="term" value="C:viral outer capsid"/>
    <property type="evidence" value="ECO:0007669"/>
    <property type="project" value="UniProtKB-UniRule"/>
</dbReference>
<dbReference type="GO" id="GO:0046872">
    <property type="term" value="F:metal ion binding"/>
    <property type="evidence" value="ECO:0007669"/>
    <property type="project" value="UniProtKB-KW"/>
</dbReference>
<dbReference type="FunFam" id="2.60.120.800:FF:000001">
    <property type="entry name" value="Outer capsid glycoprotein VP7"/>
    <property type="match status" value="1"/>
</dbReference>
<dbReference type="Gene3D" id="3.40.50.11130">
    <property type="entry name" value="Glycoprotein VP7, domain 1"/>
    <property type="match status" value="1"/>
</dbReference>
<dbReference type="Gene3D" id="2.60.120.800">
    <property type="entry name" value="Rotavirus outer-layer protein VP7, domain 2"/>
    <property type="match status" value="1"/>
</dbReference>
<dbReference type="HAMAP" id="MF_04130">
    <property type="entry name" value="Rota_VP7"/>
    <property type="match status" value="1"/>
</dbReference>
<dbReference type="HAMAP" id="MF_04131">
    <property type="entry name" value="Rota_VP7_A"/>
    <property type="match status" value="1"/>
</dbReference>
<dbReference type="InterPro" id="IPR001963">
    <property type="entry name" value="VP7"/>
</dbReference>
<dbReference type="InterPro" id="IPR042207">
    <property type="entry name" value="VP7_1"/>
</dbReference>
<dbReference type="InterPro" id="IPR042210">
    <property type="entry name" value="VP7_2"/>
</dbReference>
<dbReference type="Pfam" id="PF00434">
    <property type="entry name" value="VP7"/>
    <property type="match status" value="1"/>
</dbReference>
<reference key="1">
    <citation type="journal article" date="1987" name="Virology">
        <title>Comparison of the amino acid sequences of the major neutralization protein of four human rotavirus serotypes.</title>
        <authorList>
            <person name="Green K.Y."/>
            <person name="Midthun K."/>
            <person name="Gorziglia M."/>
            <person name="Hoshino Y."/>
            <person name="Kapikian A.Z."/>
            <person name="Chanock R.M."/>
            <person name="Flores J."/>
        </authorList>
    </citation>
    <scope>NUCLEOTIDE SEQUENCE</scope>
</reference>
<reference key="2">
    <citation type="submission" date="2003-08" db="EMBL/GenBank/DDBJ databases">
        <title>VP7 sequences in human rotavirus strains.</title>
        <authorList>
            <person name="Homma S."/>
            <person name="Hoshino Y."/>
        </authorList>
    </citation>
    <scope>NUCLEOTIDE SEQUENCE [GENOMIC RNA]</scope>
</reference>
<reference key="3">
    <citation type="journal article" date="2008" name="J. Virol.">
        <title>Group A human rotavirus genomics: evidence that gene constellations are influenced by viral protein interactions.</title>
        <authorList>
            <person name="Heiman E.M."/>
            <person name="McDonald S.M."/>
            <person name="Barro M."/>
            <person name="Taraporewala Z.F."/>
            <person name="Bar-Magen T."/>
            <person name="Patton J.T."/>
        </authorList>
    </citation>
    <scope>NUCLEOTIDE SEQUENCE [GENOMIC RNA]</scope>
</reference>
<feature type="signal peptide" evidence="2">
    <location>
        <begin position="1"/>
        <end position="50"/>
    </location>
</feature>
<feature type="chain" id="PRO_0000149602" description="Outer capsid glycoprotein VP7" evidence="2">
    <location>
        <begin position="51"/>
        <end position="326"/>
    </location>
</feature>
<feature type="region of interest" description="CNP motif; interaction with ITGAV/ITGB3" evidence="2">
    <location>
        <begin position="165"/>
        <end position="167"/>
    </location>
</feature>
<feature type="region of interest" description="GPR motif; interaction with ITGAX/ITGB2" evidence="2">
    <location>
        <begin position="253"/>
        <end position="255"/>
    </location>
</feature>
<feature type="binding site" evidence="2">
    <location>
        <position position="95"/>
    </location>
    <ligand>
        <name>Ca(2+)</name>
        <dbReference type="ChEBI" id="CHEBI:29108"/>
        <label>1</label>
    </ligand>
</feature>
<feature type="binding site" evidence="2">
    <location>
        <position position="177"/>
    </location>
    <ligand>
        <name>Ca(2+)</name>
        <dbReference type="ChEBI" id="CHEBI:29108"/>
        <label>2</label>
    </ligand>
</feature>
<feature type="binding site" evidence="2">
    <location>
        <position position="206"/>
    </location>
    <ligand>
        <name>Ca(2+)</name>
        <dbReference type="ChEBI" id="CHEBI:29108"/>
        <label>1</label>
    </ligand>
</feature>
<feature type="binding site" evidence="2">
    <location>
        <position position="214"/>
    </location>
    <ligand>
        <name>Ca(2+)</name>
        <dbReference type="ChEBI" id="CHEBI:29108"/>
        <label>1</label>
    </ligand>
</feature>
<feature type="binding site" evidence="2">
    <location>
        <position position="216"/>
    </location>
    <ligand>
        <name>Ca(2+)</name>
        <dbReference type="ChEBI" id="CHEBI:29108"/>
        <label>1</label>
    </ligand>
</feature>
<feature type="binding site" evidence="2">
    <location>
        <position position="228"/>
    </location>
    <ligand>
        <name>Ca(2+)</name>
        <dbReference type="ChEBI" id="CHEBI:29108"/>
        <label>2</label>
    </ligand>
</feature>
<feature type="binding site" evidence="2">
    <location>
        <position position="229"/>
    </location>
    <ligand>
        <name>Ca(2+)</name>
        <dbReference type="ChEBI" id="CHEBI:29108"/>
        <label>2</label>
    </ligand>
</feature>
<feature type="binding site" evidence="2">
    <location>
        <position position="231"/>
    </location>
    <ligand>
        <name>Ca(2+)</name>
        <dbReference type="ChEBI" id="CHEBI:29108"/>
        <label>2</label>
    </ligand>
</feature>
<feature type="binding site" evidence="2">
    <location>
        <position position="301"/>
    </location>
    <ligand>
        <name>Ca(2+)</name>
        <dbReference type="ChEBI" id="CHEBI:29108"/>
        <label>2</label>
    </ligand>
</feature>
<feature type="glycosylation site" description="N-linked (GlcNAc...) asparagine; by host" evidence="1">
    <location>
        <position position="69"/>
    </location>
</feature>
<feature type="glycosylation site" description="N-linked (GlcNAc...) asparagine; by host" evidence="1">
    <location>
        <position position="238"/>
    </location>
</feature>
<feature type="disulfide bond" evidence="2">
    <location>
        <begin position="82"/>
        <end position="135"/>
    </location>
</feature>
<feature type="disulfide bond" evidence="2">
    <location>
        <begin position="165"/>
        <end position="249"/>
    </location>
</feature>
<feature type="disulfide bond" evidence="2">
    <location>
        <begin position="191"/>
        <end position="244"/>
    </location>
</feature>
<feature type="disulfide bond" evidence="2">
    <location>
        <begin position="196"/>
        <end position="207"/>
    </location>
</feature>
<feature type="splice variant" id="VSP_038631" description="In isoform 2." evidence="3">
    <location>
        <begin position="1"/>
        <end position="29"/>
    </location>
</feature>
<comment type="function">
    <text evidence="2">Calcium-binding protein that interacts with rotavirus cell receptors once the initial attachment by VP4 has been achieved. Rotavirus attachment and entry into the host cell probably involves multiple sequential contacts between the outer capsid proteins VP4 and VP7, and the cell receptors. Following entry into the host cell, low intracellular or intravesicular Ca(2+) concentration probably causes the calcium-stabilized VP7 trimers to dissociate from the virion. This step is probably necessary for the membrane-disrupting entry step and the release of VP4, which is locked onto the virion by VP7.</text>
</comment>
<comment type="subunit">
    <text evidence="2">Homotrimer; disulfide-linked. 2 Ca(2+) ions bound at each subunit interface in the trimer hold the trimer together. Interacts with the intermediate capsid protein VP6. Interacts with the outer capsid protein VP5*.</text>
</comment>
<comment type="subcellular location">
    <subcellularLocation>
        <location evidence="2">Virion</location>
    </subcellularLocation>
    <subcellularLocation>
        <location evidence="2">Host endoplasmic reticulum lumen</location>
    </subcellularLocation>
    <text evidence="2">The outer layer contains 780 copies of VP7, grouped as 260 trimers. Immature double-layered particles assembled in the cytoplasm bud across the membrane of the endoplasmic reticulum, acquiring during this process a transient lipid membrane that is modified with the ER resident viral glycoproteins NSP4 and VP7; these enveloped particles also contain VP4. As the particles move towards the interior of the ER cisternae, the transient lipid membrane and the non-structural protein NSP4 are lost, while the virus surface proteins VP4 and VP7 rearrange to form the outermost virus protein layer, yielding mature infectious triple-layered particles.</text>
</comment>
<comment type="alternative products">
    <event type="alternative initiation"/>
    <isoform>
        <id>P11854-1</id>
        <name>1</name>
        <sequence type="displayed"/>
    </isoform>
    <isoform>
        <id>P11854-2</id>
        <name>2</name>
        <sequence type="described" ref="VSP_038631"/>
    </isoform>
</comment>
<comment type="PTM">
    <text evidence="2">N-glycosylated.</text>
</comment>
<comment type="PTM">
    <text evidence="2">The N-terminus is blocked possibly by pyroglutamic acid.</text>
</comment>
<comment type="miscellaneous">
    <text evidence="2">Some rotavirus strains are neuraminidase-sensitive and require sialic acid to attach to the cell surface. Some rotavirus strains are integrin-dependent. Some rotavirus strains depend on ganglioside for their entry into the host cell. Hsp70 also seems to be involved in the entry of some strains.</text>
</comment>
<comment type="miscellaneous">
    <text evidence="2">In group A rotaviruses, VP7 defines the G serotype.</text>
</comment>
<comment type="miscellaneous">
    <molecule>Isoform 2</molecule>
    <text evidence="3">Produced by alternative initiation at Met-30 of isoform 1.</text>
</comment>
<comment type="similarity">
    <text evidence="2">Belongs to the rotavirus VP7 family.</text>
</comment>
<protein>
    <recommendedName>
        <fullName evidence="2">Outer capsid glycoprotein VP7</fullName>
    </recommendedName>
</protein>
<accession>P11854</accession>
<accession>Q761X7</accession>
<sequence>MYGIEYTTVLTFLISVILLNYVLKSLTRIMDFIIYRFLLIIVILSPLLNAQNYGINLPITGSMDTPYTNSTREEVFLTSTLCLYYPTEAATEINDNSWKDTLSQLFLTKGWPTGSVYFKDYTDIASFSVDPQMYCDYNLVLMKYDATLQLDMSELADLLLNEWLCNPMDITLYYYQQTDEANKWISMGSSCTIKVCPLNTQTLGIGCLTTDTNTFEEVATAEKLVITDVVDGVNHKLNVTTNTCTIRNCKKLGPRENVAVIQVGGSDVLDITADPTTMPQTERMMRVNWKKWWQVFYTIVDYVNQIVQAMSKRSRSLNSAAFYYRV</sequence>
<keyword id="KW-0024">Alternative initiation</keyword>
<keyword id="KW-0106">Calcium</keyword>
<keyword id="KW-0167">Capsid protein</keyword>
<keyword id="KW-1015">Disulfide bond</keyword>
<keyword id="KW-0325">Glycoprotein</keyword>
<keyword id="KW-1038">Host endoplasmic reticulum</keyword>
<keyword id="KW-0945">Host-virus interaction</keyword>
<keyword id="KW-0479">Metal-binding</keyword>
<keyword id="KW-1152">Outer capsid protein</keyword>
<keyword id="KW-0732">Signal</keyword>
<keyword id="KW-1146">T=13 icosahedral capsid protein</keyword>
<keyword id="KW-0946">Virion</keyword>
<organism>
    <name type="scientific">Rotavirus A (strain RVA/Human/United States/P/1974/G3P1A[8])</name>
    <name type="common">RV-A</name>
    <dbReference type="NCBI Taxonomy" id="10957"/>
    <lineage>
        <taxon>Viruses</taxon>
        <taxon>Riboviria</taxon>
        <taxon>Orthornavirae</taxon>
        <taxon>Duplornaviricota</taxon>
        <taxon>Resentoviricetes</taxon>
        <taxon>Reovirales</taxon>
        <taxon>Sedoreoviridae</taxon>
        <taxon>Rotavirus</taxon>
        <taxon>Rotavirus A</taxon>
    </lineage>
</organism>
<evidence type="ECO:0000255" key="1"/>
<evidence type="ECO:0000255" key="2">
    <source>
        <dbReference type="HAMAP-Rule" id="MF_04131"/>
    </source>
</evidence>
<evidence type="ECO:0000305" key="3"/>
<name>VP7_ROTHP</name>
<proteinExistence type="inferred from homology"/>